<proteinExistence type="evidence at protein level"/>
<dbReference type="EC" id="3.2.1.23"/>
<dbReference type="Proteomes" id="UP000228380">
    <property type="component" value="Unplaced"/>
</dbReference>
<dbReference type="GO" id="GO:0048046">
    <property type="term" value="C:apoplast"/>
    <property type="evidence" value="ECO:0007669"/>
    <property type="project" value="UniProtKB-SubCell"/>
</dbReference>
<dbReference type="GO" id="GO:0004565">
    <property type="term" value="F:beta-galactosidase activity"/>
    <property type="evidence" value="ECO:0007669"/>
    <property type="project" value="UniProtKB-EC"/>
</dbReference>
<name>BGAL_PHODC</name>
<sequence>EIQNAGLYAILR</sequence>
<protein>
    <recommendedName>
        <fullName>Beta-galactosidase</fullName>
        <shortName>Lactase</shortName>
        <ecNumber>3.2.1.23</ecNumber>
    </recommendedName>
</protein>
<reference evidence="4" key="1">
    <citation type="journal article" date="2009" name="J. Investig. Allergol. Clin. Immunol.">
        <title>Identification of 2 new allergens of Phoenix dactylifera using an immunoproteomics approach.</title>
        <authorList>
            <person name="Postigo I."/>
            <person name="Guisantes J.A."/>
            <person name="Negro J.M."/>
            <person name="Rodriguez-Pacheco R."/>
            <person name="David-Garcia D."/>
            <person name="Martinez J."/>
        </authorList>
    </citation>
    <scope>PROTEIN SEQUENCE</scope>
    <scope>MASS SPECTROMETRY</scope>
    <scope>ALLERGEN</scope>
    <source>
        <tissue evidence="2">Pollen</tissue>
    </source>
</reference>
<evidence type="ECO:0000255" key="1"/>
<evidence type="ECO:0000269" key="2">
    <source>
    </source>
</evidence>
<evidence type="ECO:0000303" key="3">
    <source>
    </source>
</evidence>
<evidence type="ECO:0000305" key="4"/>
<organism>
    <name type="scientific">Phoenix dactylifera</name>
    <name type="common">Date palm</name>
    <dbReference type="NCBI Taxonomy" id="42345"/>
    <lineage>
        <taxon>Eukaryota</taxon>
        <taxon>Viridiplantae</taxon>
        <taxon>Streptophyta</taxon>
        <taxon>Embryophyta</taxon>
        <taxon>Tracheophyta</taxon>
        <taxon>Spermatophyta</taxon>
        <taxon>Magnoliopsida</taxon>
        <taxon>Liliopsida</taxon>
        <taxon>Arecaceae</taxon>
        <taxon>Coryphoideae</taxon>
        <taxon>Phoeniceae</taxon>
        <taxon>Phoenix</taxon>
    </lineage>
</organism>
<comment type="catalytic activity">
    <reaction evidence="4">
        <text>Hydrolysis of terminal non-reducing beta-D-galactose residues in beta-D-galactosides.</text>
        <dbReference type="EC" id="3.2.1.23"/>
    </reaction>
</comment>
<comment type="subcellular location">
    <subcellularLocation>
        <location evidence="4">Secreted</location>
        <location evidence="4">Extracellular space</location>
        <location evidence="4">Apoplast</location>
    </subcellularLocation>
</comment>
<comment type="mass spectrometry"/>
<comment type="allergen">
    <text evidence="2">Causes an allergic reaction in human. Binds to IgE.</text>
</comment>
<comment type="miscellaneous">
    <text evidence="2">On the 2D-gel the determined pI of this protein is: 6.23, its MW is: 90 kDa.</text>
</comment>
<comment type="similarity">
    <text evidence="1">Belongs to the glycosyl hydrolase 35 family.</text>
</comment>
<keyword id="KW-0020">Allergen</keyword>
<keyword id="KW-0052">Apoplast</keyword>
<keyword id="KW-0903">Direct protein sequencing</keyword>
<keyword id="KW-0326">Glycosidase</keyword>
<keyword id="KW-0378">Hydrolase</keyword>
<keyword id="KW-1185">Reference proteome</keyword>
<keyword id="KW-0964">Secreted</keyword>
<accession>P85412</accession>
<feature type="chain" id="PRO_0000372706" description="Beta-galactosidase">
    <location>
        <begin position="1" status="less than"/>
        <end position="12" status="greater than"/>
    </location>
</feature>
<feature type="non-terminal residue" evidence="3">
    <location>
        <position position="1"/>
    </location>
</feature>
<feature type="non-terminal residue" evidence="3">
    <location>
        <position position="12"/>
    </location>
</feature>